<evidence type="ECO:0000250" key="1">
    <source>
        <dbReference type="UniProtKB" id="P05198"/>
    </source>
</evidence>
<evidence type="ECO:0000250" key="2">
    <source>
        <dbReference type="UniProtKB" id="P56286"/>
    </source>
</evidence>
<evidence type="ECO:0000250" key="3">
    <source>
        <dbReference type="UniProtKB" id="P68101"/>
    </source>
</evidence>
<evidence type="ECO:0000250" key="4">
    <source>
        <dbReference type="UniProtKB" id="P83268"/>
    </source>
</evidence>
<evidence type="ECO:0000250" key="5">
    <source>
        <dbReference type="UniProtKB" id="Q6ZWX6"/>
    </source>
</evidence>
<evidence type="ECO:0000255" key="6">
    <source>
        <dbReference type="PROSITE-ProRule" id="PRU00180"/>
    </source>
</evidence>
<evidence type="ECO:0000256" key="7">
    <source>
        <dbReference type="SAM" id="MobiDB-lite"/>
    </source>
</evidence>
<evidence type="ECO:0000305" key="8"/>
<protein>
    <recommendedName>
        <fullName>Eukaryotic translation initiation factor 2 subunit 1</fullName>
    </recommendedName>
    <alternativeName>
        <fullName>Eukaryotic translation initiation factor 2 subunit alpha</fullName>
        <shortName>eIF-2-alpha</shortName>
        <shortName>eIF-2A</shortName>
        <shortName>eIF-2alpha</shortName>
        <shortName>eIF2-alpha</shortName>
    </alternativeName>
</protein>
<feature type="chain" id="PRO_0000331510" description="Eukaryotic translation initiation factor 2 subunit 1">
    <location>
        <begin position="1"/>
        <end position="315"/>
    </location>
</feature>
<feature type="domain" description="S1 motif" evidence="6">
    <location>
        <begin position="17"/>
        <end position="88"/>
    </location>
</feature>
<feature type="region of interest" description="Disordered" evidence="7">
    <location>
        <begin position="293"/>
        <end position="315"/>
    </location>
</feature>
<feature type="compositionally biased region" description="Acidic residues" evidence="7">
    <location>
        <begin position="299"/>
        <end position="308"/>
    </location>
</feature>
<feature type="modified residue" description="Phosphoserine; by HRI" evidence="4">
    <location>
        <position position="49"/>
    </location>
</feature>
<feature type="modified residue" description="Phosphoserine" evidence="1">
    <location>
        <position position="52"/>
    </location>
</feature>
<feature type="modified residue" description="N6-acetyllysine" evidence="1">
    <location>
        <position position="141"/>
    </location>
</feature>
<feature type="modified residue" description="Phosphoserine" evidence="1">
    <location>
        <position position="158"/>
    </location>
</feature>
<feature type="modified residue" description="Phosphothreonine" evidence="1">
    <location>
        <position position="279"/>
    </location>
</feature>
<feature type="modified residue" description="Phosphothreonine" evidence="1">
    <location>
        <position position="281"/>
    </location>
</feature>
<organism>
    <name type="scientific">Pongo abelii</name>
    <name type="common">Sumatran orangutan</name>
    <name type="synonym">Pongo pygmaeus abelii</name>
    <dbReference type="NCBI Taxonomy" id="9601"/>
    <lineage>
        <taxon>Eukaryota</taxon>
        <taxon>Metazoa</taxon>
        <taxon>Chordata</taxon>
        <taxon>Craniata</taxon>
        <taxon>Vertebrata</taxon>
        <taxon>Euteleostomi</taxon>
        <taxon>Mammalia</taxon>
        <taxon>Eutheria</taxon>
        <taxon>Euarchontoglires</taxon>
        <taxon>Primates</taxon>
        <taxon>Haplorrhini</taxon>
        <taxon>Catarrhini</taxon>
        <taxon>Hominidae</taxon>
        <taxon>Pongo</taxon>
    </lineage>
</organism>
<dbReference type="EMBL" id="CR861363">
    <property type="protein sequence ID" value="CAH93423.1"/>
    <property type="molecule type" value="mRNA"/>
</dbReference>
<dbReference type="RefSeq" id="NP_001127006.1">
    <property type="nucleotide sequence ID" value="NM_001133534.1"/>
</dbReference>
<dbReference type="BMRB" id="Q5R493"/>
<dbReference type="SMR" id="Q5R493"/>
<dbReference type="STRING" id="9601.ENSPPYP00000006729"/>
<dbReference type="GeneID" id="100174029"/>
<dbReference type="KEGG" id="pon:100174029"/>
<dbReference type="CTD" id="1965"/>
<dbReference type="eggNOG" id="KOG2916">
    <property type="taxonomic scope" value="Eukaryota"/>
</dbReference>
<dbReference type="InParanoid" id="Q5R493"/>
<dbReference type="OrthoDB" id="1685042at2759"/>
<dbReference type="Proteomes" id="UP000001595">
    <property type="component" value="Unplaced"/>
</dbReference>
<dbReference type="GO" id="GO:0005737">
    <property type="term" value="C:cytoplasm"/>
    <property type="evidence" value="ECO:0000250"/>
    <property type="project" value="AgBase"/>
</dbReference>
<dbReference type="GO" id="GO:0010494">
    <property type="term" value="C:cytoplasmic stress granule"/>
    <property type="evidence" value="ECO:0000250"/>
    <property type="project" value="UniProtKB"/>
</dbReference>
<dbReference type="GO" id="GO:0005829">
    <property type="term" value="C:cytosol"/>
    <property type="evidence" value="ECO:0007669"/>
    <property type="project" value="UniProtKB-SubCell"/>
</dbReference>
<dbReference type="GO" id="GO:0033290">
    <property type="term" value="C:eukaryotic 48S preinitiation complex"/>
    <property type="evidence" value="ECO:0007669"/>
    <property type="project" value="TreeGrafter"/>
</dbReference>
<dbReference type="GO" id="GO:0005850">
    <property type="term" value="C:eukaryotic translation initiation factor 2 complex"/>
    <property type="evidence" value="ECO:0000250"/>
    <property type="project" value="UniProtKB"/>
</dbReference>
<dbReference type="GO" id="GO:0005739">
    <property type="term" value="C:mitochondrion"/>
    <property type="evidence" value="ECO:0000250"/>
    <property type="project" value="UniProtKB"/>
</dbReference>
<dbReference type="GO" id="GO:0043022">
    <property type="term" value="F:ribosome binding"/>
    <property type="evidence" value="ECO:0007669"/>
    <property type="project" value="TreeGrafter"/>
</dbReference>
<dbReference type="GO" id="GO:0003723">
    <property type="term" value="F:RNA binding"/>
    <property type="evidence" value="ECO:0007669"/>
    <property type="project" value="UniProtKB-KW"/>
</dbReference>
<dbReference type="GO" id="GO:0003743">
    <property type="term" value="F:translation initiation factor activity"/>
    <property type="evidence" value="ECO:0007669"/>
    <property type="project" value="UniProtKB-KW"/>
</dbReference>
<dbReference type="GO" id="GO:0034198">
    <property type="term" value="P:cellular response to amino acid starvation"/>
    <property type="evidence" value="ECO:0000250"/>
    <property type="project" value="UniProtKB"/>
</dbReference>
<dbReference type="GO" id="GO:0034644">
    <property type="term" value="P:cellular response to UV"/>
    <property type="evidence" value="ECO:0000250"/>
    <property type="project" value="UniProtKB"/>
</dbReference>
<dbReference type="GO" id="GO:0140468">
    <property type="term" value="P:HRI-mediated signaling"/>
    <property type="evidence" value="ECO:0000250"/>
    <property type="project" value="UniProtKB"/>
</dbReference>
<dbReference type="GO" id="GO:0000423">
    <property type="term" value="P:mitophagy"/>
    <property type="evidence" value="ECO:0000250"/>
    <property type="project" value="UniProtKB"/>
</dbReference>
<dbReference type="GO" id="GO:0032057">
    <property type="term" value="P:negative regulation of translational initiation in response to stress"/>
    <property type="evidence" value="ECO:0000250"/>
    <property type="project" value="UniProtKB"/>
</dbReference>
<dbReference type="GO" id="GO:0036499">
    <property type="term" value="P:PERK-mediated unfolded protein response"/>
    <property type="evidence" value="ECO:0000250"/>
    <property type="project" value="UniProtKB"/>
</dbReference>
<dbReference type="GO" id="GO:0034976">
    <property type="term" value="P:response to endoplasmic reticulum stress"/>
    <property type="evidence" value="ECO:0000250"/>
    <property type="project" value="UniProtKB"/>
</dbReference>
<dbReference type="CDD" id="cd04452">
    <property type="entry name" value="S1_IF2_alpha"/>
    <property type="match status" value="1"/>
</dbReference>
<dbReference type="FunFam" id="1.10.150.190:FF:000001">
    <property type="entry name" value="Eukaryotic translation initiation factor 2 subunit 1"/>
    <property type="match status" value="1"/>
</dbReference>
<dbReference type="FunFam" id="2.40.50.140:FF:000795">
    <property type="entry name" value="Eukaryotic translation initiation factor 2 subunit 1"/>
    <property type="match status" value="1"/>
</dbReference>
<dbReference type="FunFam" id="3.30.70.1130:FF:000001">
    <property type="entry name" value="Eukaryotic translation initiation factor 2 subunit 1"/>
    <property type="match status" value="1"/>
</dbReference>
<dbReference type="Gene3D" id="3.30.70.1130">
    <property type="entry name" value="EIF_2_alpha"/>
    <property type="match status" value="1"/>
</dbReference>
<dbReference type="Gene3D" id="2.40.50.140">
    <property type="entry name" value="Nucleic acid-binding proteins"/>
    <property type="match status" value="1"/>
</dbReference>
<dbReference type="Gene3D" id="1.10.150.190">
    <property type="entry name" value="Translation initiation factor 2, subunit 1, domain 2"/>
    <property type="match status" value="1"/>
</dbReference>
<dbReference type="InterPro" id="IPR012340">
    <property type="entry name" value="NA-bd_OB-fold"/>
</dbReference>
<dbReference type="InterPro" id="IPR003029">
    <property type="entry name" value="S1_domain"/>
</dbReference>
<dbReference type="InterPro" id="IPR044126">
    <property type="entry name" value="S1_IF2_alpha"/>
</dbReference>
<dbReference type="InterPro" id="IPR024055">
    <property type="entry name" value="TIF2_asu_C"/>
</dbReference>
<dbReference type="InterPro" id="IPR024054">
    <property type="entry name" value="TIF2_asu_middle_sf"/>
</dbReference>
<dbReference type="InterPro" id="IPR011488">
    <property type="entry name" value="TIF_2_asu"/>
</dbReference>
<dbReference type="PANTHER" id="PTHR10602">
    <property type="entry name" value="EUKARYOTIC TRANSLATION INITIATION FACTOR 2 SUBUNIT 1"/>
    <property type="match status" value="1"/>
</dbReference>
<dbReference type="PANTHER" id="PTHR10602:SF0">
    <property type="entry name" value="EUKARYOTIC TRANSLATION INITIATION FACTOR 2 SUBUNIT 1"/>
    <property type="match status" value="1"/>
</dbReference>
<dbReference type="Pfam" id="PF07541">
    <property type="entry name" value="EIF_2_alpha"/>
    <property type="match status" value="1"/>
</dbReference>
<dbReference type="Pfam" id="PF00575">
    <property type="entry name" value="S1"/>
    <property type="match status" value="1"/>
</dbReference>
<dbReference type="SMART" id="SM00316">
    <property type="entry name" value="S1"/>
    <property type="match status" value="1"/>
</dbReference>
<dbReference type="SUPFAM" id="SSF110993">
    <property type="entry name" value="eIF-2-alpha, C-terminal domain"/>
    <property type="match status" value="1"/>
</dbReference>
<dbReference type="SUPFAM" id="SSF116742">
    <property type="entry name" value="eIF2alpha middle domain-like"/>
    <property type="match status" value="1"/>
</dbReference>
<dbReference type="SUPFAM" id="SSF50249">
    <property type="entry name" value="Nucleic acid-binding proteins"/>
    <property type="match status" value="1"/>
</dbReference>
<dbReference type="PROSITE" id="PS50126">
    <property type="entry name" value="S1"/>
    <property type="match status" value="1"/>
</dbReference>
<keyword id="KW-0007">Acetylation</keyword>
<keyword id="KW-0963">Cytoplasm</keyword>
<keyword id="KW-0396">Initiation factor</keyword>
<keyword id="KW-0496">Mitochondrion</keyword>
<keyword id="KW-0597">Phosphoprotein</keyword>
<keyword id="KW-0648">Protein biosynthesis</keyword>
<keyword id="KW-1185">Reference proteome</keyword>
<keyword id="KW-0694">RNA-binding</keyword>
<keyword id="KW-0810">Translation regulation</keyword>
<comment type="function">
    <text evidence="1">Member of the eIF2 complex that functions in the early steps of protein synthesis by forming a ternary complex with GTP and initiator tRNA. This complex binds to a 40S ribosomal subunit, followed by mRNA binding to form a 43S pre-initiation complex. Junction of the 60S ribosomal subunit to form the 80S initiation complex is preceded by hydrolysis of the GTP bound to eIF2 and release of an eIF2-GDP binary complex. In order for eIF2 to recycle and catalyze another round of initiation, the GDP bound to eIF2 must exchange with GTP by way of a reaction catalyzed by eIF2B. EIF2S1/eIF2-alpha is a key component of the integrated stress response (ISR), required for adaptation to various stress: phosphorylation by metabolic-stress sensing protein kinases (EIF2AK1/HRI, EIF2AK2/PKR, EIF2AK3/PERK and EIF2AK4/GCN2) in response to stress converts EIF2S1/eIF2-alpha in a global protein synthesis inhibitor, leading to a attenuation of cap-dependent translation, while concomitantly initiating the preferential translation of ISR-specific mRNAs, such as the transcriptional activators ATF4 and QRICH1, and hence allowing ATF4- and QRICH1-mediated reprogramming. EIF2S1/eIF2-alpha also acts as an activator of mitophagy in response to mitochondrial damage: phosphorylation by EIF2AK1/HRI promotes relocalization to the mitochondrial surface, thereby triggering PRKN-independent mitophagy (By similarity).</text>
</comment>
<comment type="activity regulation">
    <text evidence="1">Activity is regulated by phosphorylation at Ser-49 and Ser-52, which stabilizes the eIF2/GDP/eIF2B complex and prevents the eIF2B-mediated exchange of GDP for GTP, thereby preventing the formation of the 43S pre-initiation complex (43S PIC). This results in the global attenuation of 5' cap-dependent protein synthesis and concomitant translation of ISR-specific mRNAs that contain a short upstream open reading frame (uORF) in their 5' UTR, such as ATF4, ATF5, DDIT3/CHOP and PPP1R15A/GADD34.</text>
</comment>
<comment type="subunit">
    <text evidence="1 3 5">Eukaryotic translation initiation factor 2 eIF2 is a heterotrimeric complex composed of an alpha (EIF2S1), a beta (EIF2S2) and a gamma (EIF2S3) chain (By similarity). eIF2 is member of the 43S pre-initiation complex (43S PIC). eIF2 forms a complex with at least CELF1/CUGBP1, CALR, CALR3, EIF2S1, EIF2S2, HSP90B1 and HSPA5 (By similarity). Interaction with METAP2 protects EIF2S1 from inhibitory phosphorylation (By similarity). Interacts with ABCF1 (By similarity). Associates with ribosomes (By similarity). Interacts with DDX3X in an RNA-independent manner (By similarity).</text>
</comment>
<comment type="subcellular location">
    <subcellularLocation>
        <location evidence="5">Cytoplasm</location>
        <location evidence="5">Stress granule</location>
    </subcellularLocation>
    <subcellularLocation>
        <location evidence="2">Cytoplasm</location>
        <location evidence="2">Cytosol</location>
    </subcellularLocation>
    <subcellularLocation>
        <location evidence="1">Mitochondrion</location>
    </subcellularLocation>
    <text evidence="1 5">Colocalizes with NANOS3 in the stress granules (By similarity). Relocalizes to the surface of mitochondria in response to mitochondrial damage and phosphorylation by EIF2AK1/HRI (By similarity).</text>
</comment>
<comment type="PTM">
    <text evidence="1 5">Phosphorylation at Ser-49 and Ser-52 stabilizes the eIF-2/GDP/eIF2B complex and prevents GDP/GTP exchange reaction, thus impairing the recycling of eIF-2 between successive rounds of initiation and leading to global inhibition of translation, while concomitantly initiating the preferential translation of integrated stress response (ISR)-specific mRNAs (By similarity). Substrate for at least 4 kinases: EIF2AK1/HRI, EIF2AK2/PKR, EIF2AK3/PERK and EIF2AK4/GCN2 (By similarity). Phosphorylation on Ser-52 by the EIF2AK4/GCN2 protein kinase occurs in response to amino acid starvation and UV irradiation (By similarity). Phosphorylation at Ser-52 by the EIF2AK3/PERK protein kinase occurs in response to the unfolded protein response (By similarity). Phosphorylation at Ser-52 by EIF2AK1/HRI in response to mitochondrial damage promotes relocalization to the mitochondrial surface (By similarity).</text>
</comment>
<comment type="similarity">
    <text evidence="8">Belongs to the eIF-2-alpha family.</text>
</comment>
<comment type="caution">
    <text evidence="8">This gene should not be confused with EIF2A, with which it shares the alias EIF2A. Although both of these proteins function in binding initiator tRNA to the 40S ribosomal subunit, the eIF2 complex requires GTP, whereas the EIF2A protein does so in a codon-dependent manner.</text>
</comment>
<gene>
    <name type="primary">EIF2S1</name>
    <name type="synonym">EIF2A</name>
</gene>
<name>IF2A_PONAB</name>
<proteinExistence type="evidence at transcript level"/>
<accession>Q5R493</accession>
<sequence>MPGLSCRFYQHKFPEVEDVVMVNVRSIAEMGAYVSLLEYNNIEGMILLSELSRRRIRSINKLIRIGRNERVVVIRVDKEKGYIDLSKRRVSPEEAIKCEDKFTKSKTVYSILRHVAEVLEYTKDEQLESLFQRTAWVFDDKYKRPGYGAYDAFKHAVSDPSILDSLDLNEDEREVLINNINRRLTPQAVKIRADIEVACYGYEGIDAVKEALRAGLNCSTENMPIKINLIAPPRYVMTTTTLERTEGLSVLSQAMAVIKEKIEEKRGVFNVQMEPKVVTDTDETELARQMERLERENAEVDGDDDAEEMEAKAED</sequence>
<reference key="1">
    <citation type="submission" date="2004-11" db="EMBL/GenBank/DDBJ databases">
        <authorList>
            <consortium name="The German cDNA consortium"/>
        </authorList>
    </citation>
    <scope>NUCLEOTIDE SEQUENCE [LARGE SCALE MRNA]</scope>
    <source>
        <tissue>Brain cortex</tissue>
    </source>
</reference>